<keyword id="KW-0963">Cytoplasm</keyword>
<keyword id="KW-0448">Lipopolysaccharide biosynthesis</keyword>
<keyword id="KW-0548">Nucleotidyltransferase</keyword>
<keyword id="KW-0808">Transferase</keyword>
<proteinExistence type="inferred from homology"/>
<comment type="function">
    <text evidence="1">Activates KDO (a required 8-carbon sugar) for incorporation into bacterial lipopolysaccharide in Gram-negative bacteria.</text>
</comment>
<comment type="catalytic activity">
    <reaction evidence="1">
        <text>3-deoxy-alpha-D-manno-oct-2-ulosonate + CTP = CMP-3-deoxy-beta-D-manno-octulosonate + diphosphate</text>
        <dbReference type="Rhea" id="RHEA:23448"/>
        <dbReference type="ChEBI" id="CHEBI:33019"/>
        <dbReference type="ChEBI" id="CHEBI:37563"/>
        <dbReference type="ChEBI" id="CHEBI:85986"/>
        <dbReference type="ChEBI" id="CHEBI:85987"/>
        <dbReference type="EC" id="2.7.7.38"/>
    </reaction>
</comment>
<comment type="pathway">
    <text evidence="1">Nucleotide-sugar biosynthesis; CMP-3-deoxy-D-manno-octulosonate biosynthesis; CMP-3-deoxy-D-manno-octulosonate from 3-deoxy-D-manno-octulosonate and CTP: step 1/1.</text>
</comment>
<comment type="pathway">
    <text evidence="1">Bacterial outer membrane biogenesis; lipopolysaccharide biosynthesis.</text>
</comment>
<comment type="subcellular location">
    <subcellularLocation>
        <location evidence="1">Cytoplasm</location>
    </subcellularLocation>
</comment>
<comment type="similarity">
    <text evidence="1">Belongs to the KdsB family.</text>
</comment>
<organism>
    <name type="scientific">Burkholderia pseudomallei (strain 1106a)</name>
    <dbReference type="NCBI Taxonomy" id="357348"/>
    <lineage>
        <taxon>Bacteria</taxon>
        <taxon>Pseudomonadati</taxon>
        <taxon>Pseudomonadota</taxon>
        <taxon>Betaproteobacteria</taxon>
        <taxon>Burkholderiales</taxon>
        <taxon>Burkholderiaceae</taxon>
        <taxon>Burkholderia</taxon>
        <taxon>pseudomallei group</taxon>
    </lineage>
</organism>
<gene>
    <name evidence="1" type="primary">kdsB</name>
    <name type="ordered locus">BURPS1106A_0928</name>
</gene>
<dbReference type="EC" id="2.7.7.38" evidence="1"/>
<dbReference type="EMBL" id="CP000572">
    <property type="protein sequence ID" value="ABN91102.1"/>
    <property type="molecule type" value="Genomic_DNA"/>
</dbReference>
<dbReference type="RefSeq" id="WP_004185994.1">
    <property type="nucleotide sequence ID" value="NC_009076.1"/>
</dbReference>
<dbReference type="SMR" id="A3NS88"/>
<dbReference type="GeneID" id="92979969"/>
<dbReference type="KEGG" id="bpl:BURPS1106A_0928"/>
<dbReference type="HOGENOM" id="CLU_065038_1_0_4"/>
<dbReference type="UniPathway" id="UPA00030"/>
<dbReference type="UniPathway" id="UPA00358">
    <property type="reaction ID" value="UER00476"/>
</dbReference>
<dbReference type="Proteomes" id="UP000006738">
    <property type="component" value="Chromosome I"/>
</dbReference>
<dbReference type="GO" id="GO:0005829">
    <property type="term" value="C:cytosol"/>
    <property type="evidence" value="ECO:0007669"/>
    <property type="project" value="TreeGrafter"/>
</dbReference>
<dbReference type="GO" id="GO:0008690">
    <property type="term" value="F:3-deoxy-manno-octulosonate cytidylyltransferase activity"/>
    <property type="evidence" value="ECO:0007669"/>
    <property type="project" value="UniProtKB-UniRule"/>
</dbReference>
<dbReference type="GO" id="GO:0033468">
    <property type="term" value="P:CMP-keto-3-deoxy-D-manno-octulosonic acid biosynthetic process"/>
    <property type="evidence" value="ECO:0007669"/>
    <property type="project" value="UniProtKB-UniRule"/>
</dbReference>
<dbReference type="GO" id="GO:0009103">
    <property type="term" value="P:lipopolysaccharide biosynthetic process"/>
    <property type="evidence" value="ECO:0007669"/>
    <property type="project" value="UniProtKB-UniRule"/>
</dbReference>
<dbReference type="CDD" id="cd02517">
    <property type="entry name" value="CMP-KDO-Synthetase"/>
    <property type="match status" value="1"/>
</dbReference>
<dbReference type="FunFam" id="3.90.550.10:FF:000011">
    <property type="entry name" value="3-deoxy-manno-octulosonate cytidylyltransferase"/>
    <property type="match status" value="1"/>
</dbReference>
<dbReference type="Gene3D" id="3.90.550.10">
    <property type="entry name" value="Spore Coat Polysaccharide Biosynthesis Protein SpsA, Chain A"/>
    <property type="match status" value="1"/>
</dbReference>
<dbReference type="HAMAP" id="MF_00057">
    <property type="entry name" value="KdsB"/>
    <property type="match status" value="1"/>
</dbReference>
<dbReference type="InterPro" id="IPR003329">
    <property type="entry name" value="Cytidylyl_trans"/>
</dbReference>
<dbReference type="InterPro" id="IPR004528">
    <property type="entry name" value="KdsB"/>
</dbReference>
<dbReference type="InterPro" id="IPR029044">
    <property type="entry name" value="Nucleotide-diphossugar_trans"/>
</dbReference>
<dbReference type="NCBIfam" id="TIGR00466">
    <property type="entry name" value="kdsB"/>
    <property type="match status" value="1"/>
</dbReference>
<dbReference type="NCBIfam" id="NF003950">
    <property type="entry name" value="PRK05450.1-3"/>
    <property type="match status" value="1"/>
</dbReference>
<dbReference type="NCBIfam" id="NF003952">
    <property type="entry name" value="PRK05450.1-5"/>
    <property type="match status" value="1"/>
</dbReference>
<dbReference type="NCBIfam" id="NF009905">
    <property type="entry name" value="PRK13368.1"/>
    <property type="match status" value="1"/>
</dbReference>
<dbReference type="PANTHER" id="PTHR42866">
    <property type="entry name" value="3-DEOXY-MANNO-OCTULOSONATE CYTIDYLYLTRANSFERASE"/>
    <property type="match status" value="1"/>
</dbReference>
<dbReference type="PANTHER" id="PTHR42866:SF2">
    <property type="entry name" value="3-DEOXY-MANNO-OCTULOSONATE CYTIDYLYLTRANSFERASE, MITOCHONDRIAL"/>
    <property type="match status" value="1"/>
</dbReference>
<dbReference type="Pfam" id="PF02348">
    <property type="entry name" value="CTP_transf_3"/>
    <property type="match status" value="1"/>
</dbReference>
<dbReference type="SUPFAM" id="SSF53448">
    <property type="entry name" value="Nucleotide-diphospho-sugar transferases"/>
    <property type="match status" value="1"/>
</dbReference>
<protein>
    <recommendedName>
        <fullName evidence="1">3-deoxy-manno-octulosonate cytidylyltransferase</fullName>
        <ecNumber evidence="1">2.7.7.38</ecNumber>
    </recommendedName>
    <alternativeName>
        <fullName evidence="1">CMP-2-keto-3-deoxyoctulosonic acid synthase</fullName>
        <shortName evidence="1">CKS</shortName>
        <shortName evidence="1">CMP-KDO synthase</shortName>
    </alternativeName>
</protein>
<feature type="chain" id="PRO_0000370036" description="3-deoxy-manno-octulosonate cytidylyltransferase">
    <location>
        <begin position="1"/>
        <end position="263"/>
    </location>
</feature>
<name>KDSB_BURP0</name>
<reference key="1">
    <citation type="journal article" date="2010" name="Genome Biol. Evol.">
        <title>Continuing evolution of Burkholderia mallei through genome reduction and large-scale rearrangements.</title>
        <authorList>
            <person name="Losada L."/>
            <person name="Ronning C.M."/>
            <person name="DeShazer D."/>
            <person name="Woods D."/>
            <person name="Fedorova N."/>
            <person name="Kim H.S."/>
            <person name="Shabalina S.A."/>
            <person name="Pearson T.R."/>
            <person name="Brinkac L."/>
            <person name="Tan P."/>
            <person name="Nandi T."/>
            <person name="Crabtree J."/>
            <person name="Badger J."/>
            <person name="Beckstrom-Sternberg S."/>
            <person name="Saqib M."/>
            <person name="Schutzer S.E."/>
            <person name="Keim P."/>
            <person name="Nierman W.C."/>
        </authorList>
    </citation>
    <scope>NUCLEOTIDE SEQUENCE [LARGE SCALE GENOMIC DNA]</scope>
    <source>
        <strain>1106a</strain>
    </source>
</reference>
<evidence type="ECO:0000255" key="1">
    <source>
        <dbReference type="HAMAP-Rule" id="MF_00057"/>
    </source>
</evidence>
<accession>A3NS88</accession>
<sequence length="263" mass="28758">MTSPLPFVAVVPARLASTRLPNKPLADLGGKPMVVRVAERAREAGAQQVLVASDAQRVLDAVREHGFDAVLTRADHPSGTDRLAEVAAKLGFDDDTIVVNVQGDEPLIDPQLVRDVASHLAAHPSCAIATAAHPIHEAHEVFNPNYVKVVLDAHGVALYFSRAPIPWSRDAYLPHWPNVAAMPAPTCPVYRHIGLYAYRARFLRTYPTLAQAPIEAAEQLEQLRAMWHGERIAVRVTEHAPEAGIDTPADLERVQALFRSRAK</sequence>